<evidence type="ECO:0000255" key="1">
    <source>
        <dbReference type="HAMAP-Rule" id="MF_00396"/>
    </source>
</evidence>
<accession>B9ES20</accession>
<comment type="function">
    <text evidence="1">Component of the cytochrome b6-f complex, which mediates electron transfer between photosystem II (PSII) and photosystem I (PSI), cyclic electron flow around PSI, and state transitions.</text>
</comment>
<comment type="subunit">
    <text evidence="1">The 4 large subunits of the cytochrome b6-f complex are cytochrome b6, subunit IV (17 kDa polypeptide, PetD), cytochrome f and the Rieske protein, while the 4 small subunits are PetG, PetL, PetM and PetN. The complex functions as a dimer.</text>
</comment>
<comment type="subcellular location">
    <subcellularLocation>
        <location evidence="1">Cellular thylakoid membrane</location>
        <topology evidence="1">Single-pass membrane protein</topology>
    </subcellularLocation>
</comment>
<comment type="similarity">
    <text evidence="1">Belongs to the PetM family.</text>
</comment>
<keyword id="KW-0249">Electron transport</keyword>
<keyword id="KW-0472">Membrane</keyword>
<keyword id="KW-0602">Photosynthesis</keyword>
<keyword id="KW-1185">Reference proteome</keyword>
<keyword id="KW-0793">Thylakoid</keyword>
<keyword id="KW-0812">Transmembrane</keyword>
<keyword id="KW-1133">Transmembrane helix</keyword>
<keyword id="KW-0813">Transport</keyword>
<gene>
    <name evidence="1" type="primary">petM</name>
    <name type="ordered locus">PMT_2636</name>
</gene>
<feature type="chain" id="PRO_1000192353" description="Cytochrome b6-f complex subunit 7">
    <location>
        <begin position="1"/>
        <end position="32"/>
    </location>
</feature>
<feature type="transmembrane region" description="Helical" evidence="1">
    <location>
        <begin position="9"/>
        <end position="27"/>
    </location>
</feature>
<organism>
    <name type="scientific">Prochlorococcus marinus (strain MIT 9313)</name>
    <dbReference type="NCBI Taxonomy" id="74547"/>
    <lineage>
        <taxon>Bacteria</taxon>
        <taxon>Bacillati</taxon>
        <taxon>Cyanobacteriota</taxon>
        <taxon>Cyanophyceae</taxon>
        <taxon>Synechococcales</taxon>
        <taxon>Prochlorococcaceae</taxon>
        <taxon>Prochlorococcus</taxon>
    </lineage>
</organism>
<proteinExistence type="inferred from homology"/>
<reference key="1">
    <citation type="journal article" date="2003" name="Nature">
        <title>Genome divergence in two Prochlorococcus ecotypes reflects oceanic niche differentiation.</title>
        <authorList>
            <person name="Rocap G."/>
            <person name="Larimer F.W."/>
            <person name="Lamerdin J.E."/>
            <person name="Malfatti S."/>
            <person name="Chain P."/>
            <person name="Ahlgren N.A."/>
            <person name="Arellano A."/>
            <person name="Coleman M."/>
            <person name="Hauser L."/>
            <person name="Hess W.R."/>
            <person name="Johnson Z.I."/>
            <person name="Land M.L."/>
            <person name="Lindell D."/>
            <person name="Post A.F."/>
            <person name="Regala W."/>
            <person name="Shah M."/>
            <person name="Shaw S.L."/>
            <person name="Steglich C."/>
            <person name="Sullivan M.B."/>
            <person name="Ting C.S."/>
            <person name="Tolonen A."/>
            <person name="Webb E.A."/>
            <person name="Zinser E.R."/>
            <person name="Chisholm S.W."/>
        </authorList>
    </citation>
    <scope>NUCLEOTIDE SEQUENCE [LARGE SCALE GENOMIC DNA]</scope>
    <source>
        <strain>MIT 9313</strain>
    </source>
</reference>
<sequence>MASEIFGIAAVFWVLIPVGLAGGALLLKLQGD</sequence>
<name>PETM_PROMM</name>
<protein>
    <recommendedName>
        <fullName evidence="1">Cytochrome b6-f complex subunit 7</fullName>
    </recommendedName>
    <alternativeName>
        <fullName evidence="1">Cytochrome b6-f complex subunit PetM</fullName>
    </alternativeName>
    <alternativeName>
        <fullName evidence="1">Cytochrome b6-f complex subunit VII</fullName>
    </alternativeName>
</protein>
<dbReference type="EMBL" id="BX548175">
    <property type="protein sequence ID" value="CAX32155.1"/>
    <property type="molecule type" value="Genomic_DNA"/>
</dbReference>
<dbReference type="RefSeq" id="WP_011130544.1">
    <property type="nucleotide sequence ID" value="NC_005071.1"/>
</dbReference>
<dbReference type="SMR" id="B9ES20"/>
<dbReference type="KEGG" id="pmt:PMT_2636"/>
<dbReference type="HOGENOM" id="CLU_216743_1_0_3"/>
<dbReference type="Proteomes" id="UP000001423">
    <property type="component" value="Chromosome"/>
</dbReference>
<dbReference type="GO" id="GO:0009512">
    <property type="term" value="C:cytochrome b6f complex"/>
    <property type="evidence" value="ECO:0007669"/>
    <property type="project" value="InterPro"/>
</dbReference>
<dbReference type="GO" id="GO:0031676">
    <property type="term" value="C:plasma membrane-derived thylakoid membrane"/>
    <property type="evidence" value="ECO:0007669"/>
    <property type="project" value="UniProtKB-SubCell"/>
</dbReference>
<dbReference type="GO" id="GO:0009055">
    <property type="term" value="F:electron transfer activity"/>
    <property type="evidence" value="ECO:0007669"/>
    <property type="project" value="UniProtKB-UniRule"/>
</dbReference>
<dbReference type="GO" id="GO:0015979">
    <property type="term" value="P:photosynthesis"/>
    <property type="evidence" value="ECO:0007669"/>
    <property type="project" value="UniProtKB-KW"/>
</dbReference>
<dbReference type="HAMAP" id="MF_00396">
    <property type="entry name" value="Cytb6_f_PetM"/>
    <property type="match status" value="1"/>
</dbReference>
<dbReference type="InterPro" id="IPR012595">
    <property type="entry name" value="PetM_cyt_b6/f_cplx_su7"/>
</dbReference>
<dbReference type="NCBIfam" id="NF008826">
    <property type="entry name" value="PRK11876.1-2"/>
    <property type="match status" value="1"/>
</dbReference>
<dbReference type="Pfam" id="PF08041">
    <property type="entry name" value="PetM"/>
    <property type="match status" value="1"/>
</dbReference>